<accession>Q4UMK7</accession>
<comment type="similarity">
    <text evidence="1">Belongs to the bacterial ribosomal protein bL35 family.</text>
</comment>
<evidence type="ECO:0000255" key="1">
    <source>
        <dbReference type="HAMAP-Rule" id="MF_00514"/>
    </source>
</evidence>
<evidence type="ECO:0000305" key="2"/>
<organism>
    <name type="scientific">Rickettsia felis (strain ATCC VR-1525 / URRWXCal2)</name>
    <name type="common">Rickettsia azadi</name>
    <dbReference type="NCBI Taxonomy" id="315456"/>
    <lineage>
        <taxon>Bacteria</taxon>
        <taxon>Pseudomonadati</taxon>
        <taxon>Pseudomonadota</taxon>
        <taxon>Alphaproteobacteria</taxon>
        <taxon>Rickettsiales</taxon>
        <taxon>Rickettsiaceae</taxon>
        <taxon>Rickettsieae</taxon>
        <taxon>Rickettsia</taxon>
        <taxon>spotted fever group</taxon>
    </lineage>
</organism>
<name>RL35_RICFE</name>
<gene>
    <name evidence="1" type="primary">rpmI</name>
    <name type="ordered locus">RF_0350</name>
</gene>
<dbReference type="EMBL" id="CP000053">
    <property type="protein sequence ID" value="AAY61201.1"/>
    <property type="molecule type" value="Genomic_DNA"/>
</dbReference>
<dbReference type="SMR" id="Q4UMK7"/>
<dbReference type="STRING" id="315456.RF_0350"/>
<dbReference type="KEGG" id="rfe:RF_0350"/>
<dbReference type="eggNOG" id="COG0291">
    <property type="taxonomic scope" value="Bacteria"/>
</dbReference>
<dbReference type="HOGENOM" id="CLU_169643_2_1_5"/>
<dbReference type="OrthoDB" id="9804851at2"/>
<dbReference type="Proteomes" id="UP000008548">
    <property type="component" value="Chromosome"/>
</dbReference>
<dbReference type="GO" id="GO:0022625">
    <property type="term" value="C:cytosolic large ribosomal subunit"/>
    <property type="evidence" value="ECO:0007669"/>
    <property type="project" value="TreeGrafter"/>
</dbReference>
<dbReference type="GO" id="GO:0003735">
    <property type="term" value="F:structural constituent of ribosome"/>
    <property type="evidence" value="ECO:0007669"/>
    <property type="project" value="InterPro"/>
</dbReference>
<dbReference type="GO" id="GO:0006412">
    <property type="term" value="P:translation"/>
    <property type="evidence" value="ECO:0007669"/>
    <property type="project" value="UniProtKB-UniRule"/>
</dbReference>
<dbReference type="FunFam" id="4.10.410.60:FF:000001">
    <property type="entry name" value="50S ribosomal protein L35"/>
    <property type="match status" value="1"/>
</dbReference>
<dbReference type="Gene3D" id="4.10.410.60">
    <property type="match status" value="1"/>
</dbReference>
<dbReference type="HAMAP" id="MF_00514">
    <property type="entry name" value="Ribosomal_bL35"/>
    <property type="match status" value="1"/>
</dbReference>
<dbReference type="InterPro" id="IPR001706">
    <property type="entry name" value="Ribosomal_bL35"/>
</dbReference>
<dbReference type="InterPro" id="IPR021137">
    <property type="entry name" value="Ribosomal_bL35-like"/>
</dbReference>
<dbReference type="InterPro" id="IPR018265">
    <property type="entry name" value="Ribosomal_bL35_CS"/>
</dbReference>
<dbReference type="InterPro" id="IPR037229">
    <property type="entry name" value="Ribosomal_bL35_sf"/>
</dbReference>
<dbReference type="NCBIfam" id="TIGR00001">
    <property type="entry name" value="rpmI_bact"/>
    <property type="match status" value="1"/>
</dbReference>
<dbReference type="PANTHER" id="PTHR33343">
    <property type="entry name" value="54S RIBOSOMAL PROTEIN BL35M"/>
    <property type="match status" value="1"/>
</dbReference>
<dbReference type="PANTHER" id="PTHR33343:SF1">
    <property type="entry name" value="LARGE RIBOSOMAL SUBUNIT PROTEIN BL35M"/>
    <property type="match status" value="1"/>
</dbReference>
<dbReference type="Pfam" id="PF01632">
    <property type="entry name" value="Ribosomal_L35p"/>
    <property type="match status" value="1"/>
</dbReference>
<dbReference type="PRINTS" id="PR00064">
    <property type="entry name" value="RIBOSOMALL35"/>
</dbReference>
<dbReference type="SUPFAM" id="SSF143034">
    <property type="entry name" value="L35p-like"/>
    <property type="match status" value="1"/>
</dbReference>
<dbReference type="PROSITE" id="PS00936">
    <property type="entry name" value="RIBOSOMAL_L35"/>
    <property type="match status" value="1"/>
</dbReference>
<protein>
    <recommendedName>
        <fullName evidence="1">Large ribosomal subunit protein bL35</fullName>
    </recommendedName>
    <alternativeName>
        <fullName evidence="2">50S ribosomal protein L35</fullName>
    </alternativeName>
</protein>
<sequence length="68" mass="7797">MPKLKTKSAVKKRFKLTASGKVIASQAGKKHFMRRRTKAQIRNLRGTTILCPQDGYNIKKYFLPYGIN</sequence>
<feature type="chain" id="PRO_0000258743" description="Large ribosomal subunit protein bL35">
    <location>
        <begin position="1"/>
        <end position="68"/>
    </location>
</feature>
<keyword id="KW-0687">Ribonucleoprotein</keyword>
<keyword id="KW-0689">Ribosomal protein</keyword>
<reference key="1">
    <citation type="journal article" date="2005" name="PLoS Biol.">
        <title>The genome sequence of Rickettsia felis identifies the first putative conjugative plasmid in an obligate intracellular parasite.</title>
        <authorList>
            <person name="Ogata H."/>
            <person name="Renesto P."/>
            <person name="Audic S."/>
            <person name="Robert C."/>
            <person name="Blanc G."/>
            <person name="Fournier P.-E."/>
            <person name="Parinello H."/>
            <person name="Claverie J.-M."/>
            <person name="Raoult D."/>
        </authorList>
    </citation>
    <scope>NUCLEOTIDE SEQUENCE [LARGE SCALE GENOMIC DNA]</scope>
    <source>
        <strain>ATCC VR-1525 / URRWXCal2</strain>
    </source>
</reference>
<proteinExistence type="inferred from homology"/>